<evidence type="ECO:0000250" key="1"/>
<evidence type="ECO:0000255" key="2"/>
<evidence type="ECO:0000255" key="3">
    <source>
        <dbReference type="PROSITE-ProRule" id="PRU00038"/>
    </source>
</evidence>
<evidence type="ECO:0000255" key="4">
    <source>
        <dbReference type="PROSITE-ProRule" id="PRU00159"/>
    </source>
</evidence>
<evidence type="ECO:0000255" key="5">
    <source>
        <dbReference type="PROSITE-ProRule" id="PRU00315"/>
    </source>
</evidence>
<evidence type="ECO:0000256" key="6">
    <source>
        <dbReference type="SAM" id="MobiDB-lite"/>
    </source>
</evidence>
<reference key="1">
    <citation type="journal article" date="1999" name="Nature">
        <title>Sequence and analysis of chromosome 2 of the plant Arabidopsis thaliana.</title>
        <authorList>
            <person name="Lin X."/>
            <person name="Kaul S."/>
            <person name="Rounsley S.D."/>
            <person name="Shea T.P."/>
            <person name="Benito M.-I."/>
            <person name="Town C.D."/>
            <person name="Fujii C.Y."/>
            <person name="Mason T.M."/>
            <person name="Bowman C.L."/>
            <person name="Barnstead M.E."/>
            <person name="Feldblyum T.V."/>
            <person name="Buell C.R."/>
            <person name="Ketchum K.A."/>
            <person name="Lee J.J."/>
            <person name="Ronning C.M."/>
            <person name="Koo H.L."/>
            <person name="Moffat K.S."/>
            <person name="Cronin L.A."/>
            <person name="Shen M."/>
            <person name="Pai G."/>
            <person name="Van Aken S."/>
            <person name="Umayam L."/>
            <person name="Tallon L.J."/>
            <person name="Gill J.E."/>
            <person name="Adams M.D."/>
            <person name="Carrera A.J."/>
            <person name="Creasy T.H."/>
            <person name="Goodman H.M."/>
            <person name="Somerville C.R."/>
            <person name="Copenhaver G.P."/>
            <person name="Preuss D."/>
            <person name="Nierman W.C."/>
            <person name="White O."/>
            <person name="Eisen J.A."/>
            <person name="Salzberg S.L."/>
            <person name="Fraser C.M."/>
            <person name="Venter J.C."/>
        </authorList>
    </citation>
    <scope>NUCLEOTIDE SEQUENCE [LARGE SCALE GENOMIC DNA]</scope>
    <source>
        <strain>cv. Columbia</strain>
    </source>
</reference>
<reference key="2">
    <citation type="journal article" date="2017" name="Plant J.">
        <title>Araport11: a complete reannotation of the Arabidopsis thaliana reference genome.</title>
        <authorList>
            <person name="Cheng C.Y."/>
            <person name="Krishnakumar V."/>
            <person name="Chan A.P."/>
            <person name="Thibaud-Nissen F."/>
            <person name="Schobel S."/>
            <person name="Town C.D."/>
        </authorList>
    </citation>
    <scope>GENOME REANNOTATION</scope>
    <source>
        <strain>cv. Columbia</strain>
    </source>
</reference>
<reference key="3">
    <citation type="journal article" date="2008" name="Plant Physiol.">
        <title>Interactions between the S-domain receptor kinases and AtPUB-ARM E3 ubiquitin ligases suggest a conserved signaling pathway in Arabidopsis.</title>
        <authorList>
            <person name="Samuel M.A."/>
            <person name="Mudgil Y."/>
            <person name="Salt J.N."/>
            <person name="Delmas F."/>
            <person name="Ramachandran S."/>
            <person name="Chilelli A."/>
            <person name="Goring D.R."/>
        </authorList>
    </citation>
    <scope>GENE FAMILY</scope>
    <scope>NOMENCLATURE</scope>
</reference>
<name>SD31_ARATH</name>
<sequence>MKMLRALLLCLSLVFFLAFQIVVSEIQLGSKLVVGENTLWVSNNGDFALGFFNPPGLLNRFSIGIWFNSNSIPYDQRKVVWVAGAGVVVSDNSSYFELTRNGELVLFDSLLGVPVWNSKTNRFSVSSALLRDDGNLVLLKDREEIVWQSFGTPTDTLLPNQKFPAFEMLRAASENSRSSYYSLHLEDSGRLELRWESNITFWSSGNEVVKKKKKKKNIGAVLTSEGALFLEDQDLMRPVWSVFGEDHNDTVKFRFLRLDRDGNLRMYSWNEDSRIWKPVWQAVENQCRVFATCGSQVCSFNSSGYTECNCPFNAFVSVSDPKCLVPYQKPGCKSGFNMVKFKNLELYGIYPANDSVISQISSQRCKKLCLENSACTAVTYTNDGEPQCRMKLTRYISGYSDPSLSSISYVKTCLDPIAVDPNNVSKESPVTVTKSHSICIPCLVGATSTTLVLFLGFQLGIVVYIYRRKKKLAKKKAERFSKATNPKGVMIFSVDEIKAMTDNFDNNIGPQIFKGVMPENELVAVKEVEATLTEERKFRSSASKIGTMHHKNLANLEGYCCELGRRFLVYEYAKNGSILDHIVDPLRSKKLTWRIRTDTCLSVAKALCYLHMECREFVSHGNLNCGNILLGEDLEAKLTEYGFGLCAADKDVEDFGKTVLALITGRYEPEGVVSEWVYREWIGGRKETVVDKGLEGCFDVEELERVLRISFWCVQTDERLRPSMGEVVKVLEGTLSVDPPPPPFACARSSPTNSSESSQSLYEP</sequence>
<comment type="catalytic activity">
    <reaction>
        <text>L-seryl-[protein] + ATP = O-phospho-L-seryl-[protein] + ADP + H(+)</text>
        <dbReference type="Rhea" id="RHEA:17989"/>
        <dbReference type="Rhea" id="RHEA-COMP:9863"/>
        <dbReference type="Rhea" id="RHEA-COMP:11604"/>
        <dbReference type="ChEBI" id="CHEBI:15378"/>
        <dbReference type="ChEBI" id="CHEBI:29999"/>
        <dbReference type="ChEBI" id="CHEBI:30616"/>
        <dbReference type="ChEBI" id="CHEBI:83421"/>
        <dbReference type="ChEBI" id="CHEBI:456216"/>
        <dbReference type="EC" id="2.7.11.1"/>
    </reaction>
</comment>
<comment type="catalytic activity">
    <reaction>
        <text>L-threonyl-[protein] + ATP = O-phospho-L-threonyl-[protein] + ADP + H(+)</text>
        <dbReference type="Rhea" id="RHEA:46608"/>
        <dbReference type="Rhea" id="RHEA-COMP:11060"/>
        <dbReference type="Rhea" id="RHEA-COMP:11605"/>
        <dbReference type="ChEBI" id="CHEBI:15378"/>
        <dbReference type="ChEBI" id="CHEBI:30013"/>
        <dbReference type="ChEBI" id="CHEBI:30616"/>
        <dbReference type="ChEBI" id="CHEBI:61977"/>
        <dbReference type="ChEBI" id="CHEBI:456216"/>
        <dbReference type="EC" id="2.7.11.1"/>
    </reaction>
</comment>
<comment type="subcellular location">
    <subcellularLocation>
        <location evidence="1">Cell membrane</location>
        <topology evidence="1">Single-pass type I membrane protein</topology>
    </subcellularLocation>
</comment>
<comment type="domain">
    <text>The protein kinase domain is predicted to be catalytically inactive.</text>
</comment>
<keyword id="KW-0067">ATP-binding</keyword>
<keyword id="KW-1003">Cell membrane</keyword>
<keyword id="KW-1015">Disulfide bond</keyword>
<keyword id="KW-0245">EGF-like domain</keyword>
<keyword id="KW-0325">Glycoprotein</keyword>
<keyword id="KW-0418">Kinase</keyword>
<keyword id="KW-0430">Lectin</keyword>
<keyword id="KW-0472">Membrane</keyword>
<keyword id="KW-0547">Nucleotide-binding</keyword>
<keyword id="KW-0675">Receptor</keyword>
<keyword id="KW-1185">Reference proteome</keyword>
<keyword id="KW-0677">Repeat</keyword>
<keyword id="KW-0723">Serine/threonine-protein kinase</keyword>
<keyword id="KW-0732">Signal</keyword>
<keyword id="KW-0808">Transferase</keyword>
<keyword id="KW-0812">Transmembrane</keyword>
<keyword id="KW-1133">Transmembrane helix</keyword>
<feature type="signal peptide" evidence="2">
    <location>
        <begin position="1"/>
        <end position="24"/>
    </location>
</feature>
<feature type="chain" id="PRO_0000401304" description="G-type lectin S-receptor-like serine/threonine-protein kinase SD3-1">
    <location>
        <begin position="25"/>
        <end position="764"/>
    </location>
</feature>
<feature type="topological domain" description="Extracellular" evidence="2">
    <location>
        <begin position="25"/>
        <end position="442"/>
    </location>
</feature>
<feature type="transmembrane region" description="Helical" evidence="2">
    <location>
        <begin position="443"/>
        <end position="463"/>
    </location>
</feature>
<feature type="topological domain" description="Cytoplasmic" evidence="2">
    <location>
        <begin position="464"/>
        <end position="764"/>
    </location>
</feature>
<feature type="domain" description="Bulb-type lectin 1" evidence="3">
    <location>
        <begin position="25"/>
        <end position="151"/>
    </location>
</feature>
<feature type="domain" description="Bulb-type lectin 2" evidence="3">
    <location>
        <begin position="154"/>
        <end position="279"/>
    </location>
</feature>
<feature type="domain" description="EGF-like; atypical">
    <location>
        <begin position="283"/>
        <end position="320"/>
    </location>
</feature>
<feature type="domain" description="Apple" evidence="5">
    <location>
        <begin position="332"/>
        <end position="413"/>
    </location>
</feature>
<feature type="domain" description="Protein kinase" evidence="4">
    <location>
        <begin position="466"/>
        <end position="764"/>
    </location>
</feature>
<feature type="region of interest" description="CaM-binding" evidence="1">
    <location>
        <begin position="586"/>
        <end position="603"/>
    </location>
</feature>
<feature type="region of interest" description="Disordered" evidence="6">
    <location>
        <begin position="738"/>
        <end position="764"/>
    </location>
</feature>
<feature type="compositionally biased region" description="Low complexity" evidence="6">
    <location>
        <begin position="749"/>
        <end position="764"/>
    </location>
</feature>
<feature type="binding site" evidence="4">
    <location>
        <begin position="508"/>
        <end position="516"/>
    </location>
    <ligand>
        <name>ATP</name>
        <dbReference type="ChEBI" id="CHEBI:30616"/>
    </ligand>
</feature>
<feature type="binding site" evidence="4">
    <location>
        <position position="526"/>
    </location>
    <ligand>
        <name>ATP</name>
        <dbReference type="ChEBI" id="CHEBI:30616"/>
    </ligand>
</feature>
<feature type="glycosylation site" description="N-linked (GlcNAc...) asparagine" evidence="2">
    <location>
        <position position="92"/>
    </location>
</feature>
<feature type="glycosylation site" description="N-linked (GlcNAc...) asparagine" evidence="2">
    <location>
        <position position="198"/>
    </location>
</feature>
<feature type="glycosylation site" description="N-linked (GlcNAc...) asparagine" evidence="2">
    <location>
        <position position="248"/>
    </location>
</feature>
<feature type="glycosylation site" description="N-linked (GlcNAc...) asparagine" evidence="2">
    <location>
        <position position="301"/>
    </location>
</feature>
<feature type="glycosylation site" description="N-linked (GlcNAc...) asparagine" evidence="2">
    <location>
        <position position="353"/>
    </location>
</feature>
<feature type="glycosylation site" description="N-linked (GlcNAc...) asparagine" evidence="2">
    <location>
        <position position="423"/>
    </location>
</feature>
<feature type="disulfide bond" evidence="1">
    <location>
        <begin position="287"/>
        <end position="298"/>
    </location>
</feature>
<feature type="disulfide bond" evidence="1">
    <location>
        <begin position="293"/>
        <end position="308"/>
    </location>
</feature>
<feature type="disulfide bond" evidence="1">
    <location>
        <begin position="332"/>
        <end position="413"/>
    </location>
</feature>
<feature type="disulfide bond" evidence="1">
    <location>
        <begin position="365"/>
        <end position="388"/>
    </location>
</feature>
<feature type="disulfide bond" evidence="1">
    <location>
        <begin position="369"/>
        <end position="375"/>
    </location>
</feature>
<accession>P93756</accession>
<organism>
    <name type="scientific">Arabidopsis thaliana</name>
    <name type="common">Mouse-ear cress</name>
    <dbReference type="NCBI Taxonomy" id="3702"/>
    <lineage>
        <taxon>Eukaryota</taxon>
        <taxon>Viridiplantae</taxon>
        <taxon>Streptophyta</taxon>
        <taxon>Embryophyta</taxon>
        <taxon>Tracheophyta</taxon>
        <taxon>Spermatophyta</taxon>
        <taxon>Magnoliopsida</taxon>
        <taxon>eudicotyledons</taxon>
        <taxon>Gunneridae</taxon>
        <taxon>Pentapetalae</taxon>
        <taxon>rosids</taxon>
        <taxon>malvids</taxon>
        <taxon>Brassicales</taxon>
        <taxon>Brassicaceae</taxon>
        <taxon>Camelineae</taxon>
        <taxon>Arabidopsis</taxon>
    </lineage>
</organism>
<protein>
    <recommendedName>
        <fullName>G-type lectin S-receptor-like serine/threonine-protein kinase SD3-1</fullName>
        <ecNumber>2.7.11.1</ecNumber>
    </recommendedName>
    <alternativeName>
        <fullName>S-domain-3 (SD3) receptor kinase 1</fullName>
        <shortName>SD3-1</shortName>
    </alternativeName>
</protein>
<proteinExistence type="inferred from homology"/>
<dbReference type="EC" id="2.7.11.1"/>
<dbReference type="EMBL" id="AC002339">
    <property type="protein sequence ID" value="AAM14823.1"/>
    <property type="molecule type" value="Genomic_DNA"/>
</dbReference>
<dbReference type="EMBL" id="U90439">
    <property type="protein sequence ID" value="AAB63553.1"/>
    <property type="molecule type" value="Genomic_DNA"/>
</dbReference>
<dbReference type="EMBL" id="CP002685">
    <property type="protein sequence ID" value="AEC10045.1"/>
    <property type="molecule type" value="Genomic_DNA"/>
</dbReference>
<dbReference type="PIR" id="D84847">
    <property type="entry name" value="D84847"/>
</dbReference>
<dbReference type="RefSeq" id="NP_001318404.1">
    <property type="nucleotide sequence ID" value="NM_001336946.1"/>
</dbReference>
<dbReference type="SMR" id="P93756"/>
<dbReference type="FunCoup" id="P93756">
    <property type="interactions" value="402"/>
</dbReference>
<dbReference type="STRING" id="3702.P93756"/>
<dbReference type="GlyCosmos" id="P93756">
    <property type="glycosylation" value="6 sites, No reported glycans"/>
</dbReference>
<dbReference type="GlyGen" id="P93756">
    <property type="glycosylation" value="6 sites"/>
</dbReference>
<dbReference type="PaxDb" id="3702-AT2G41890.1"/>
<dbReference type="ProteomicsDB" id="232754"/>
<dbReference type="EnsemblPlants" id="AT2G41890.1">
    <property type="protein sequence ID" value="AT2G41890.1"/>
    <property type="gene ID" value="AT2G41890"/>
</dbReference>
<dbReference type="GeneID" id="818789"/>
<dbReference type="Gramene" id="AT2G41890.1">
    <property type="protein sequence ID" value="AT2G41890.1"/>
    <property type="gene ID" value="AT2G41890"/>
</dbReference>
<dbReference type="KEGG" id="ath:AT2G41890"/>
<dbReference type="Araport" id="AT2G41890"/>
<dbReference type="TAIR" id="AT2G41890"/>
<dbReference type="eggNOG" id="ENOG502QW3Z">
    <property type="taxonomic scope" value="Eukaryota"/>
</dbReference>
<dbReference type="HOGENOM" id="CLU_000288_116_2_1"/>
<dbReference type="InParanoid" id="P93756"/>
<dbReference type="OMA" id="QKICVAC"/>
<dbReference type="PhylomeDB" id="P93756"/>
<dbReference type="PRO" id="PR:P93756"/>
<dbReference type="Proteomes" id="UP000006548">
    <property type="component" value="Chromosome 2"/>
</dbReference>
<dbReference type="ExpressionAtlas" id="P93756">
    <property type="expression patterns" value="baseline and differential"/>
</dbReference>
<dbReference type="GO" id="GO:0005886">
    <property type="term" value="C:plasma membrane"/>
    <property type="evidence" value="ECO:0007669"/>
    <property type="project" value="UniProtKB-SubCell"/>
</dbReference>
<dbReference type="GO" id="GO:0005524">
    <property type="term" value="F:ATP binding"/>
    <property type="evidence" value="ECO:0007669"/>
    <property type="project" value="UniProtKB-KW"/>
</dbReference>
<dbReference type="GO" id="GO:0005516">
    <property type="term" value="F:calmodulin binding"/>
    <property type="evidence" value="ECO:0000250"/>
    <property type="project" value="UniProtKB"/>
</dbReference>
<dbReference type="GO" id="GO:0030246">
    <property type="term" value="F:carbohydrate binding"/>
    <property type="evidence" value="ECO:0007669"/>
    <property type="project" value="UniProtKB-KW"/>
</dbReference>
<dbReference type="GO" id="GO:0106310">
    <property type="term" value="F:protein serine kinase activity"/>
    <property type="evidence" value="ECO:0007669"/>
    <property type="project" value="RHEA"/>
</dbReference>
<dbReference type="GO" id="GO:0004674">
    <property type="term" value="F:protein serine/threonine kinase activity"/>
    <property type="evidence" value="ECO:0000250"/>
    <property type="project" value="UniProtKB"/>
</dbReference>
<dbReference type="GO" id="GO:0031625">
    <property type="term" value="F:ubiquitin protein ligase binding"/>
    <property type="evidence" value="ECO:0007669"/>
    <property type="project" value="UniProtKB-ARBA"/>
</dbReference>
<dbReference type="GO" id="GO:0048544">
    <property type="term" value="P:recognition of pollen"/>
    <property type="evidence" value="ECO:0007669"/>
    <property type="project" value="InterPro"/>
</dbReference>
<dbReference type="CDD" id="cd00028">
    <property type="entry name" value="B_lectin"/>
    <property type="match status" value="1"/>
</dbReference>
<dbReference type="CDD" id="cd01098">
    <property type="entry name" value="PAN_AP_plant"/>
    <property type="match status" value="1"/>
</dbReference>
<dbReference type="FunFam" id="2.90.10.10:FF:000016">
    <property type="entry name" value="G-type lectin S-receptor-like serine/threonine-protein kinase"/>
    <property type="match status" value="1"/>
</dbReference>
<dbReference type="FunFam" id="1.10.510.10:FF:000846">
    <property type="entry name" value="G-type lectin S-receptor-like serine/threonine-protein kinase SD3-1"/>
    <property type="match status" value="1"/>
</dbReference>
<dbReference type="FunFam" id="1.10.510.10:FF:001016">
    <property type="entry name" value="G-type lectin S-receptor-like serine/threonine-protein kinase SD3-1"/>
    <property type="match status" value="1"/>
</dbReference>
<dbReference type="FunFam" id="2.90.10.10:FF:000032">
    <property type="entry name" value="G-type lectin S-receptor-like serine/threonine-protein kinase SD3-1"/>
    <property type="match status" value="1"/>
</dbReference>
<dbReference type="FunFam" id="3.30.200.20:FF:000798">
    <property type="entry name" value="G-type lectin S-receptor-like serine/threonine-protein kinase SD3-1"/>
    <property type="match status" value="1"/>
</dbReference>
<dbReference type="Gene3D" id="2.90.10.10">
    <property type="entry name" value="Bulb-type lectin domain"/>
    <property type="match status" value="2"/>
</dbReference>
<dbReference type="Gene3D" id="3.30.200.20">
    <property type="entry name" value="Phosphorylase Kinase, domain 1"/>
    <property type="match status" value="1"/>
</dbReference>
<dbReference type="Gene3D" id="1.10.510.10">
    <property type="entry name" value="Transferase(Phosphotransferase) domain 1"/>
    <property type="match status" value="2"/>
</dbReference>
<dbReference type="InterPro" id="IPR001480">
    <property type="entry name" value="Bulb-type_lectin_dom"/>
</dbReference>
<dbReference type="InterPro" id="IPR036426">
    <property type="entry name" value="Bulb-type_lectin_dom_sf"/>
</dbReference>
<dbReference type="InterPro" id="IPR011009">
    <property type="entry name" value="Kinase-like_dom_sf"/>
</dbReference>
<dbReference type="InterPro" id="IPR003609">
    <property type="entry name" value="Pan_app"/>
</dbReference>
<dbReference type="InterPro" id="IPR000719">
    <property type="entry name" value="Prot_kinase_dom"/>
</dbReference>
<dbReference type="InterPro" id="IPR000858">
    <property type="entry name" value="S_locus_glycoprot_dom"/>
</dbReference>
<dbReference type="InterPro" id="IPR001245">
    <property type="entry name" value="Ser-Thr/Tyr_kinase_cat_dom"/>
</dbReference>
<dbReference type="InterPro" id="IPR024171">
    <property type="entry name" value="SRK-like_kinase"/>
</dbReference>
<dbReference type="PANTHER" id="PTHR47974:SF13">
    <property type="entry name" value="G-TYPE LECTIN S-RECEPTOR-LIKE SERINE_THREONINE-PROTEIN KINASE SD3-1"/>
    <property type="match status" value="1"/>
</dbReference>
<dbReference type="PANTHER" id="PTHR47974">
    <property type="entry name" value="OS07G0415500 PROTEIN"/>
    <property type="match status" value="1"/>
</dbReference>
<dbReference type="Pfam" id="PF01453">
    <property type="entry name" value="B_lectin"/>
    <property type="match status" value="1"/>
</dbReference>
<dbReference type="Pfam" id="PF00024">
    <property type="entry name" value="PAN_1"/>
    <property type="match status" value="1"/>
</dbReference>
<dbReference type="Pfam" id="PF07714">
    <property type="entry name" value="PK_Tyr_Ser-Thr"/>
    <property type="match status" value="1"/>
</dbReference>
<dbReference type="Pfam" id="PF00954">
    <property type="entry name" value="S_locus_glycop"/>
    <property type="match status" value="1"/>
</dbReference>
<dbReference type="PIRSF" id="PIRSF000641">
    <property type="entry name" value="SRK"/>
    <property type="match status" value="1"/>
</dbReference>
<dbReference type="SMART" id="SM00108">
    <property type="entry name" value="B_lectin"/>
    <property type="match status" value="1"/>
</dbReference>
<dbReference type="SMART" id="SM00473">
    <property type="entry name" value="PAN_AP"/>
    <property type="match status" value="1"/>
</dbReference>
<dbReference type="SUPFAM" id="SSF51110">
    <property type="entry name" value="alpha-D-mannose-specific plant lectins"/>
    <property type="match status" value="2"/>
</dbReference>
<dbReference type="SUPFAM" id="SSF56112">
    <property type="entry name" value="Protein kinase-like (PK-like)"/>
    <property type="match status" value="1"/>
</dbReference>
<dbReference type="PROSITE" id="PS50927">
    <property type="entry name" value="BULB_LECTIN"/>
    <property type="match status" value="2"/>
</dbReference>
<dbReference type="PROSITE" id="PS50948">
    <property type="entry name" value="PAN"/>
    <property type="match status" value="1"/>
</dbReference>
<dbReference type="PROSITE" id="PS50011">
    <property type="entry name" value="PROTEIN_KINASE_DOM"/>
    <property type="match status" value="1"/>
</dbReference>
<gene>
    <name type="primary">SD31</name>
    <name type="ordered locus">At2g41890</name>
    <name type="ORF">T11A7.1</name>
</gene>